<name>NB1_MYCBO</name>
<accession>Q7TY17</accession>
<accession>A0A1R3Y1Z9</accession>
<accession>X2BLN9</accession>
<evidence type="ECO:0000255" key="1">
    <source>
        <dbReference type="HAMAP-Rule" id="MF_01297"/>
    </source>
</evidence>
<gene>
    <name type="ordered locus">BQ2027_MB2736C</name>
</gene>
<proteinExistence type="inferred from homology"/>
<feature type="chain" id="PRO_0000356914" description="Peroxynitrite isomerase 1">
    <location>
        <begin position="1"/>
        <end position="164"/>
    </location>
</feature>
<feature type="short sequence motif" description="GXWXGXG" evidence="1">
    <location>
        <begin position="17"/>
        <end position="23"/>
    </location>
</feature>
<feature type="binding site" description="axial binding residue" evidence="1">
    <location>
        <position position="155"/>
    </location>
    <ligand>
        <name>heme b</name>
        <dbReference type="ChEBI" id="CHEBI:60344"/>
    </ligand>
    <ligandPart>
        <name>Fe</name>
        <dbReference type="ChEBI" id="CHEBI:18248"/>
    </ligandPart>
</feature>
<reference key="1">
    <citation type="journal article" date="2003" name="Proc. Natl. Acad. Sci. U.S.A.">
        <title>The complete genome sequence of Mycobacterium bovis.</title>
        <authorList>
            <person name="Garnier T."/>
            <person name="Eiglmeier K."/>
            <person name="Camus J.-C."/>
            <person name="Medina N."/>
            <person name="Mansoor H."/>
            <person name="Pryor M."/>
            <person name="Duthoy S."/>
            <person name="Grondin S."/>
            <person name="Lacroix C."/>
            <person name="Monsempe C."/>
            <person name="Simon S."/>
            <person name="Harris B."/>
            <person name="Atkin R."/>
            <person name="Doggett J."/>
            <person name="Mayes R."/>
            <person name="Keating L."/>
            <person name="Wheeler P.R."/>
            <person name="Parkhill J."/>
            <person name="Barrell B.G."/>
            <person name="Cole S.T."/>
            <person name="Gordon S.V."/>
            <person name="Hewinson R.G."/>
        </authorList>
    </citation>
    <scope>NUCLEOTIDE SEQUENCE [LARGE SCALE GENOMIC DNA]</scope>
    <source>
        <strain>ATCC BAA-935 / AF2122/97</strain>
    </source>
</reference>
<reference key="2">
    <citation type="journal article" date="2017" name="Genome Announc.">
        <title>Updated reference genome sequence and annotation of Mycobacterium bovis AF2122/97.</title>
        <authorList>
            <person name="Malone K.M."/>
            <person name="Farrell D."/>
            <person name="Stuber T.P."/>
            <person name="Schubert O.T."/>
            <person name="Aebersold R."/>
            <person name="Robbe-Austerman S."/>
            <person name="Gordon S.V."/>
        </authorList>
    </citation>
    <scope>NUCLEOTIDE SEQUENCE [LARGE SCALE GENOMIC DNA]</scope>
    <scope>GENOME REANNOTATION</scope>
    <source>
        <strain>ATCC BAA-935 / AF2122/97</strain>
    </source>
</reference>
<keyword id="KW-0349">Heme</keyword>
<keyword id="KW-0408">Iron</keyword>
<keyword id="KW-0413">Isomerase</keyword>
<keyword id="KW-0479">Metal-binding</keyword>
<keyword id="KW-1185">Reference proteome</keyword>
<sequence length="164" mass="17846">MTRDLAPALQALSPLLGSWAGRGAGKYPTIRPFEYLEEVVFAHVGKPFLTYTQQTRAVADGKPLHSETGYLRVCRPGCVELVLAHPSGITEIEVGTYSVTGDVIELELSTRADGSIGLAPTAKEVTALDRSYRIDGDELSYSLQMRAVGQPLQDHLAAVLHRQR</sequence>
<comment type="function">
    <text evidence="1">Heme-binding protein able to scavenge peroxynitrite and to protect free L-tyrosine against peroxynitrite-mediated nitration, by acting as a peroxynitrite isomerase that converts peroxynitrite to nitrate. Therefore, this protein likely plays a role in peroxynitrite sensing and in the detoxification of reactive nitrogen and oxygen species (RNS and ROS, respectively). Is able to bind nitric oxide (NO) in vitro, but may act as a sensor of peroxynitrite levels in vivo.</text>
</comment>
<comment type="catalytic activity">
    <reaction evidence="1">
        <text>peroxynitrite = nitrate</text>
        <dbReference type="Rhea" id="RHEA:63116"/>
        <dbReference type="ChEBI" id="CHEBI:17632"/>
        <dbReference type="ChEBI" id="CHEBI:25941"/>
    </reaction>
    <physiologicalReaction direction="left-to-right" evidence="1">
        <dbReference type="Rhea" id="RHEA:63117"/>
    </physiologicalReaction>
</comment>
<comment type="cofactor">
    <cofactor evidence="1">
        <name>heme b</name>
        <dbReference type="ChEBI" id="CHEBI:60344"/>
    </cofactor>
    <text evidence="1">Binds 1 heme b group per subunit, that coordinates a highly solvent-exposed Fe(III) atom.</text>
</comment>
<comment type="pathway">
    <text evidence="1">Nitrogen metabolism.</text>
</comment>
<comment type="subunit">
    <text evidence="1">Homodimer.</text>
</comment>
<comment type="domain">
    <text evidence="1">Forms a 10-stranded antiparallel beta-barrel structure able to accommodate a hydrophobic ligand in its interior. In fact, this fold hosts the heme group, which is located in a wide surface cleft.</text>
</comment>
<comment type="similarity">
    <text evidence="1">Belongs to the nitrobindin family.</text>
</comment>
<protein>
    <recommendedName>
        <fullName>Peroxynitrite isomerase 1</fullName>
        <ecNumber evidence="1">5.99.-.-</ecNumber>
    </recommendedName>
    <alternativeName>
        <fullName>Ferric nitrobindin</fullName>
        <shortName>Nb(III)</shortName>
    </alternativeName>
</protein>
<dbReference type="EC" id="5.99.-.-" evidence="1"/>
<dbReference type="EMBL" id="LT708304">
    <property type="protein sequence ID" value="SIU01354.1"/>
    <property type="molecule type" value="Genomic_DNA"/>
</dbReference>
<dbReference type="RefSeq" id="NP_856382.1">
    <property type="nucleotide sequence ID" value="NC_002945.3"/>
</dbReference>
<dbReference type="RefSeq" id="WP_003900559.1">
    <property type="nucleotide sequence ID" value="NC_002945.4"/>
</dbReference>
<dbReference type="SMR" id="Q7TY17"/>
<dbReference type="KEGG" id="mbo:BQ2027_MB2736C"/>
<dbReference type="PATRIC" id="fig|233413.5.peg.2998"/>
<dbReference type="Proteomes" id="UP000001419">
    <property type="component" value="Chromosome"/>
</dbReference>
<dbReference type="GO" id="GO:0020037">
    <property type="term" value="F:heme binding"/>
    <property type="evidence" value="ECO:0007669"/>
    <property type="project" value="UniProtKB-UniRule"/>
</dbReference>
<dbReference type="GO" id="GO:0046872">
    <property type="term" value="F:metal ion binding"/>
    <property type="evidence" value="ECO:0007669"/>
    <property type="project" value="UniProtKB-KW"/>
</dbReference>
<dbReference type="GO" id="GO:0062213">
    <property type="term" value="F:peroxynitrite isomerase activity"/>
    <property type="evidence" value="ECO:0007669"/>
    <property type="project" value="UniProtKB-UniRule"/>
</dbReference>
<dbReference type="CDD" id="cd07828">
    <property type="entry name" value="lipocalin_heme-bd-THAP4-like"/>
    <property type="match status" value="1"/>
</dbReference>
<dbReference type="Gene3D" id="2.40.128.20">
    <property type="match status" value="1"/>
</dbReference>
<dbReference type="HAMAP" id="MF_01297">
    <property type="entry name" value="nitrobindin"/>
    <property type="match status" value="1"/>
</dbReference>
<dbReference type="InterPro" id="IPR012674">
    <property type="entry name" value="Calycin"/>
</dbReference>
<dbReference type="InterPro" id="IPR022939">
    <property type="entry name" value="Nb(III)_bact/plant"/>
</dbReference>
<dbReference type="InterPro" id="IPR045165">
    <property type="entry name" value="Nitrobindin"/>
</dbReference>
<dbReference type="InterPro" id="IPR054873">
    <property type="entry name" value="PeroxynitIsom"/>
</dbReference>
<dbReference type="InterPro" id="IPR014878">
    <property type="entry name" value="THAP4-like_heme-bd"/>
</dbReference>
<dbReference type="NCBIfam" id="NF045819">
    <property type="entry name" value="PeroxynitIsom"/>
    <property type="match status" value="1"/>
</dbReference>
<dbReference type="PANTHER" id="PTHR15854:SF4">
    <property type="entry name" value="PEROXYNITRITE ISOMERASE THAP4"/>
    <property type="match status" value="1"/>
</dbReference>
<dbReference type="PANTHER" id="PTHR15854">
    <property type="entry name" value="THAP4 PROTEIN"/>
    <property type="match status" value="1"/>
</dbReference>
<dbReference type="Pfam" id="PF08768">
    <property type="entry name" value="THAP4_heme-bd"/>
    <property type="match status" value="1"/>
</dbReference>
<dbReference type="SUPFAM" id="SSF50814">
    <property type="entry name" value="Lipocalins"/>
    <property type="match status" value="1"/>
</dbReference>
<organism>
    <name type="scientific">Mycobacterium bovis (strain ATCC BAA-935 / AF2122/97)</name>
    <dbReference type="NCBI Taxonomy" id="233413"/>
    <lineage>
        <taxon>Bacteria</taxon>
        <taxon>Bacillati</taxon>
        <taxon>Actinomycetota</taxon>
        <taxon>Actinomycetes</taxon>
        <taxon>Mycobacteriales</taxon>
        <taxon>Mycobacteriaceae</taxon>
        <taxon>Mycobacterium</taxon>
        <taxon>Mycobacterium tuberculosis complex</taxon>
    </lineage>
</organism>